<comment type="function">
    <text evidence="1">Has antibacterial activity against the Gram-positive bacteria L.lactis (MIC=25 uM) and S.uberis (MIC=50 uM). Lacks antibacterial activity against the Gram-negative bacteria E.cloacae and E.coli, and against the Gram-positive bacteria B.cereus, E.faecalis, L.innocua, M.luteus, S.aureus and S.epidermidis. Inhibits the formation of NO by neuronal nitric oxide synthase with an IC(50) of 2.4 uM.</text>
</comment>
<comment type="subcellular location">
    <subcellularLocation>
        <location evidence="1">Secreted</location>
    </subcellularLocation>
</comment>
<comment type="tissue specificity">
    <text evidence="1">Expressed by the skin glands.</text>
</comment>
<feature type="peptide" id="PRO_0000371747" description="Deserticolin-1" evidence="1">
    <location>
        <begin position="1"/>
        <end position="19"/>
    </location>
</feature>
<feature type="modified residue" description="Serine amide" evidence="1">
    <location>
        <position position="19"/>
    </location>
</feature>
<reference evidence="3" key="1">
    <citation type="journal article" date="2008" name="Regul. Pept.">
        <title>Disulfide-containing peptides from the glandular skin secretions of froglets of the genus Crinia: structure, activity and evolutionary trends.</title>
        <authorList>
            <person name="Jackway R.J."/>
            <person name="Pukala T.L."/>
            <person name="Maselli V.M."/>
            <person name="Musgrave I.F."/>
            <person name="Bowie J.H."/>
            <person name="Liu Y."/>
            <person name="Surinya-Johnson K.H."/>
            <person name="Donnellan S.C."/>
            <person name="Doyle J.R."/>
            <person name="Llewellyn L.E."/>
            <person name="Tyler M.J."/>
        </authorList>
    </citation>
    <scope>PROTEIN SEQUENCE</scope>
    <scope>FUNCTION</scope>
    <scope>SUBCELLULAR LOCATION</scope>
    <scope>TISSUE SPECIFICITY</scope>
    <scope>AMIDATION AT SER-19</scope>
    <scope>DISCUSSION OF SEQUENCE</scope>
    <source>
        <tissue evidence="1">Skin secretion</tissue>
    </source>
</reference>
<organism>
    <name type="scientific">Crinia deserticola</name>
    <name type="common">Desert froglet</name>
    <dbReference type="NCBI Taxonomy" id="104060"/>
    <lineage>
        <taxon>Eukaryota</taxon>
        <taxon>Metazoa</taxon>
        <taxon>Chordata</taxon>
        <taxon>Craniata</taxon>
        <taxon>Vertebrata</taxon>
        <taxon>Euteleostomi</taxon>
        <taxon>Amphibia</taxon>
        <taxon>Batrachia</taxon>
        <taxon>Anura</taxon>
        <taxon>Neobatrachia</taxon>
        <taxon>Myobatrachoidea</taxon>
        <taxon>Myobatrachidae</taxon>
        <taxon>Myobatrachinae</taxon>
        <taxon>Crinia</taxon>
    </lineage>
</organism>
<accession>P86136</accession>
<protein>
    <recommendedName>
        <fullName evidence="2">Deserticolin-1</fullName>
    </recommendedName>
</protein>
<name>DES1_CRIDS</name>
<keyword id="KW-0027">Amidation</keyword>
<keyword id="KW-0878">Amphibian defense peptide</keyword>
<keyword id="KW-0044">Antibiotic</keyword>
<keyword id="KW-0929">Antimicrobial</keyword>
<keyword id="KW-0903">Direct protein sequencing</keyword>
<keyword id="KW-0964">Secreted</keyword>
<dbReference type="GO" id="GO:0005576">
    <property type="term" value="C:extracellular region"/>
    <property type="evidence" value="ECO:0007669"/>
    <property type="project" value="UniProtKB-SubCell"/>
</dbReference>
<dbReference type="GO" id="GO:0042742">
    <property type="term" value="P:defense response to bacterium"/>
    <property type="evidence" value="ECO:0007669"/>
    <property type="project" value="UniProtKB-KW"/>
</dbReference>
<sequence>GLADFLNKAVGKVVDFVKS</sequence>
<proteinExistence type="evidence at protein level"/>
<evidence type="ECO:0000269" key="1">
    <source>
    </source>
</evidence>
<evidence type="ECO:0000303" key="2">
    <source>
    </source>
</evidence>
<evidence type="ECO:0000305" key="3"/>